<protein>
    <recommendedName>
        <fullName evidence="2">Translation initiation factor IF-2</fullName>
    </recommendedName>
</protein>
<sequence length="979" mass="107534">MSIKLFSLAKELNVGVGSLAGFLRKKGFDVEDNNPNVRIENEEFDLLLTEFGKSLPKGEAERIRKKFVKQKQGTPASAPSAKEETAGMAAKEAQVIATEVPQDMRPRFTIKGKVETEKPAEPVPSPKDKEPDTVREDKPARETAPVKEETKVVPVKEDKPKEEKPKQEEPKREEPKPEEPVQAAPVAKPVEKPVDKPQQPVMTQKPQEAETPPPAQEMEKKEDTEEVFRLKTNTQEPQVKVVGKIDLSSINSSTRPKKKTKEDRQREQNDADGKKKRKRINKAAVDVKKEAAKVSGEQGKRNAGGGNHSSGNKNNNRPAQQQSNASGGRKNNKRQSLPPKVEISDEDVQRQVKETLARLTTKKTSTTLGRGAKYRKDKRDAASRAAQDAMELNSEEQHTLKLTEFVTVSDLSNMMDVPVNEVIATCMSIGMMVGINQRLDAETINIVAEEFGFKTEFVSADLVEAIAPEEDNEEDLVARPPIVTVMGHVDHGKTSLLDRIRNTNVIEGEAGGITQHIGAYGLKLPSGRRITFLDTPGHEAFTAMRARGAKITDIAIIIVAADDDVMPQTVEAINHASAAGVPMVFAINKIDKPAANPERIKEQLANMNYLVEDWGGKYQSQEISAKKGINITELLEKVLLEADILELKANPNRRAIGSIIESSLDKGRGYVSTVMVQNGTLNMGDVVLAGTCHGRIKAMFNERNQRVKQAGPSEPVLILGLNGAPAAGDTFNVLETEQEAREIANRREQLQREQGLRTHKILTLEDISRRRAIGNFQELNLIVKGDVDGSVEALSDSLIRLSTEEIQVNVIHKAVGQISESDVVLAAASSAIIIGFQVRPSVAARKQAETDGVEIRTYSIIYDTIEDIKSAMEGMLSPEIREEVTGSLEVLQTFKISKVGTIAGCMVKEGKVKRTSKVRLIRDGIVIHTGELGSLKRFKDDAKEVVAGLECGLNLAHSNDIQDGDIIEAFDEIEIKKTL</sequence>
<comment type="function">
    <text evidence="2">One of the essential components for the initiation of protein synthesis. Protects formylmethionyl-tRNA from spontaneous hydrolysis and promotes its binding to the 30S ribosomal subunits. Also involved in the hydrolysis of GTP during the formation of the 70S ribosomal complex.</text>
</comment>
<comment type="subcellular location">
    <subcellularLocation>
        <location evidence="2">Cytoplasm</location>
    </subcellularLocation>
</comment>
<comment type="similarity">
    <text evidence="2">Belongs to the TRAFAC class translation factor GTPase superfamily. Classic translation factor GTPase family. IF-2 subfamily.</text>
</comment>
<proteinExistence type="inferred from homology"/>
<evidence type="ECO:0000250" key="1"/>
<evidence type="ECO:0000255" key="2">
    <source>
        <dbReference type="HAMAP-Rule" id="MF_00100"/>
    </source>
</evidence>
<evidence type="ECO:0000256" key="3">
    <source>
        <dbReference type="SAM" id="MobiDB-lite"/>
    </source>
</evidence>
<keyword id="KW-0963">Cytoplasm</keyword>
<keyword id="KW-0342">GTP-binding</keyword>
<keyword id="KW-0396">Initiation factor</keyword>
<keyword id="KW-0547">Nucleotide-binding</keyword>
<keyword id="KW-0648">Protein biosynthesis</keyword>
<keyword id="KW-1185">Reference proteome</keyword>
<name>IF2_PORGI</name>
<reference key="1">
    <citation type="journal article" date="2003" name="J. Bacteriol.">
        <title>Complete genome sequence of the oral pathogenic bacterium Porphyromonas gingivalis strain W83.</title>
        <authorList>
            <person name="Nelson K.E."/>
            <person name="Fleischmann R.D."/>
            <person name="DeBoy R.T."/>
            <person name="Paulsen I.T."/>
            <person name="Fouts D.E."/>
            <person name="Eisen J.A."/>
            <person name="Daugherty S.C."/>
            <person name="Dodson R.J."/>
            <person name="Durkin A.S."/>
            <person name="Gwinn M.L."/>
            <person name="Haft D.H."/>
            <person name="Kolonay J.F."/>
            <person name="Nelson W.C."/>
            <person name="Mason T.M."/>
            <person name="Tallon L."/>
            <person name="Gray J."/>
            <person name="Granger D."/>
            <person name="Tettelin H."/>
            <person name="Dong H."/>
            <person name="Galvin J.L."/>
            <person name="Duncan M.J."/>
            <person name="Dewhirst F.E."/>
            <person name="Fraser C.M."/>
        </authorList>
    </citation>
    <scope>NUCLEOTIDE SEQUENCE [LARGE SCALE GENOMIC DNA]</scope>
    <source>
        <strain>ATCC BAA-308 / W83</strain>
    </source>
</reference>
<organism>
    <name type="scientific">Porphyromonas gingivalis (strain ATCC BAA-308 / W83)</name>
    <dbReference type="NCBI Taxonomy" id="242619"/>
    <lineage>
        <taxon>Bacteria</taxon>
        <taxon>Pseudomonadati</taxon>
        <taxon>Bacteroidota</taxon>
        <taxon>Bacteroidia</taxon>
        <taxon>Bacteroidales</taxon>
        <taxon>Porphyromonadaceae</taxon>
        <taxon>Porphyromonas</taxon>
    </lineage>
</organism>
<accession>Q7MXE4</accession>
<dbReference type="EMBL" id="AE015924">
    <property type="protein sequence ID" value="AAQ65478.1"/>
    <property type="molecule type" value="Genomic_DNA"/>
</dbReference>
<dbReference type="RefSeq" id="WP_005874178.1">
    <property type="nucleotide sequence ID" value="NC_002950.2"/>
</dbReference>
<dbReference type="SMR" id="Q7MXE4"/>
<dbReference type="STRING" id="242619.PG_0255"/>
<dbReference type="EnsemblBacteria" id="AAQ65478">
    <property type="protein sequence ID" value="AAQ65478"/>
    <property type="gene ID" value="PG_0255"/>
</dbReference>
<dbReference type="KEGG" id="pgi:PG_0255"/>
<dbReference type="PATRIC" id="fig|242619.8.peg.235"/>
<dbReference type="eggNOG" id="COG0532">
    <property type="taxonomic scope" value="Bacteria"/>
</dbReference>
<dbReference type="eggNOG" id="COG3266">
    <property type="taxonomic scope" value="Bacteria"/>
</dbReference>
<dbReference type="HOGENOM" id="CLU_006301_0_0_10"/>
<dbReference type="BioCyc" id="PGIN242619:G1G02-240-MONOMER"/>
<dbReference type="Proteomes" id="UP000000588">
    <property type="component" value="Chromosome"/>
</dbReference>
<dbReference type="GO" id="GO:0005737">
    <property type="term" value="C:cytoplasm"/>
    <property type="evidence" value="ECO:0007669"/>
    <property type="project" value="UniProtKB-SubCell"/>
</dbReference>
<dbReference type="GO" id="GO:0005525">
    <property type="term" value="F:GTP binding"/>
    <property type="evidence" value="ECO:0007669"/>
    <property type="project" value="UniProtKB-KW"/>
</dbReference>
<dbReference type="GO" id="GO:0003924">
    <property type="term" value="F:GTPase activity"/>
    <property type="evidence" value="ECO:0007669"/>
    <property type="project" value="UniProtKB-UniRule"/>
</dbReference>
<dbReference type="GO" id="GO:0003743">
    <property type="term" value="F:translation initiation factor activity"/>
    <property type="evidence" value="ECO:0007669"/>
    <property type="project" value="UniProtKB-UniRule"/>
</dbReference>
<dbReference type="CDD" id="cd01887">
    <property type="entry name" value="IF2_eIF5B"/>
    <property type="match status" value="1"/>
</dbReference>
<dbReference type="CDD" id="cd03702">
    <property type="entry name" value="IF2_mtIF2_II"/>
    <property type="match status" value="1"/>
</dbReference>
<dbReference type="CDD" id="cd03692">
    <property type="entry name" value="mtIF2_IVc"/>
    <property type="match status" value="1"/>
</dbReference>
<dbReference type="FunFam" id="2.40.30.10:FF:000007">
    <property type="entry name" value="Translation initiation factor IF-2"/>
    <property type="match status" value="1"/>
</dbReference>
<dbReference type="FunFam" id="2.40.30.10:FF:000008">
    <property type="entry name" value="Translation initiation factor IF-2"/>
    <property type="match status" value="1"/>
</dbReference>
<dbReference type="FunFam" id="3.40.50.10050:FF:000001">
    <property type="entry name" value="Translation initiation factor IF-2"/>
    <property type="match status" value="1"/>
</dbReference>
<dbReference type="FunFam" id="3.40.50.300:FF:000019">
    <property type="entry name" value="Translation initiation factor IF-2"/>
    <property type="match status" value="1"/>
</dbReference>
<dbReference type="Gene3D" id="3.40.50.300">
    <property type="entry name" value="P-loop containing nucleotide triphosphate hydrolases"/>
    <property type="match status" value="1"/>
</dbReference>
<dbReference type="Gene3D" id="2.40.30.10">
    <property type="entry name" value="Translation factors"/>
    <property type="match status" value="2"/>
</dbReference>
<dbReference type="Gene3D" id="3.40.50.10050">
    <property type="entry name" value="Translation initiation factor IF- 2, domain 3"/>
    <property type="match status" value="1"/>
</dbReference>
<dbReference type="HAMAP" id="MF_00100_B">
    <property type="entry name" value="IF_2_B"/>
    <property type="match status" value="1"/>
</dbReference>
<dbReference type="InterPro" id="IPR053905">
    <property type="entry name" value="EF-G-like_DII"/>
</dbReference>
<dbReference type="InterPro" id="IPR004161">
    <property type="entry name" value="EFTu-like_2"/>
</dbReference>
<dbReference type="InterPro" id="IPR044145">
    <property type="entry name" value="IF2_II"/>
</dbReference>
<dbReference type="InterPro" id="IPR006847">
    <property type="entry name" value="IF2_N"/>
</dbReference>
<dbReference type="InterPro" id="IPR027417">
    <property type="entry name" value="P-loop_NTPase"/>
</dbReference>
<dbReference type="InterPro" id="IPR005225">
    <property type="entry name" value="Small_GTP-bd"/>
</dbReference>
<dbReference type="InterPro" id="IPR000795">
    <property type="entry name" value="T_Tr_GTP-bd_dom"/>
</dbReference>
<dbReference type="InterPro" id="IPR000178">
    <property type="entry name" value="TF_IF2_bacterial-like"/>
</dbReference>
<dbReference type="InterPro" id="IPR015760">
    <property type="entry name" value="TIF_IF2"/>
</dbReference>
<dbReference type="InterPro" id="IPR023115">
    <property type="entry name" value="TIF_IF2_dom3"/>
</dbReference>
<dbReference type="InterPro" id="IPR036925">
    <property type="entry name" value="TIF_IF2_dom3_sf"/>
</dbReference>
<dbReference type="InterPro" id="IPR009000">
    <property type="entry name" value="Transl_B-barrel_sf"/>
</dbReference>
<dbReference type="NCBIfam" id="TIGR00487">
    <property type="entry name" value="IF-2"/>
    <property type="match status" value="1"/>
</dbReference>
<dbReference type="NCBIfam" id="TIGR00231">
    <property type="entry name" value="small_GTP"/>
    <property type="match status" value="1"/>
</dbReference>
<dbReference type="PANTHER" id="PTHR43381:SF5">
    <property type="entry name" value="TR-TYPE G DOMAIN-CONTAINING PROTEIN"/>
    <property type="match status" value="1"/>
</dbReference>
<dbReference type="PANTHER" id="PTHR43381">
    <property type="entry name" value="TRANSLATION INITIATION FACTOR IF-2-RELATED"/>
    <property type="match status" value="1"/>
</dbReference>
<dbReference type="Pfam" id="PF22042">
    <property type="entry name" value="EF-G_D2"/>
    <property type="match status" value="1"/>
</dbReference>
<dbReference type="Pfam" id="PF00009">
    <property type="entry name" value="GTP_EFTU"/>
    <property type="match status" value="1"/>
</dbReference>
<dbReference type="Pfam" id="PF03144">
    <property type="entry name" value="GTP_EFTU_D2"/>
    <property type="match status" value="1"/>
</dbReference>
<dbReference type="Pfam" id="PF11987">
    <property type="entry name" value="IF-2"/>
    <property type="match status" value="1"/>
</dbReference>
<dbReference type="Pfam" id="PF04760">
    <property type="entry name" value="IF2_N"/>
    <property type="match status" value="1"/>
</dbReference>
<dbReference type="SUPFAM" id="SSF52156">
    <property type="entry name" value="Initiation factor IF2/eIF5b, domain 3"/>
    <property type="match status" value="1"/>
</dbReference>
<dbReference type="SUPFAM" id="SSF52540">
    <property type="entry name" value="P-loop containing nucleoside triphosphate hydrolases"/>
    <property type="match status" value="1"/>
</dbReference>
<dbReference type="SUPFAM" id="SSF50447">
    <property type="entry name" value="Translation proteins"/>
    <property type="match status" value="2"/>
</dbReference>
<dbReference type="PROSITE" id="PS51722">
    <property type="entry name" value="G_TR_2"/>
    <property type="match status" value="1"/>
</dbReference>
<dbReference type="PROSITE" id="PS01176">
    <property type="entry name" value="IF2"/>
    <property type="match status" value="1"/>
</dbReference>
<gene>
    <name evidence="2" type="primary">infB</name>
    <name type="ordered locus">PG_0255</name>
</gene>
<feature type="chain" id="PRO_0000137232" description="Translation initiation factor IF-2">
    <location>
        <begin position="1"/>
        <end position="979"/>
    </location>
</feature>
<feature type="domain" description="tr-type G">
    <location>
        <begin position="478"/>
        <end position="646"/>
    </location>
</feature>
<feature type="region of interest" description="Disordered" evidence="3">
    <location>
        <begin position="68"/>
        <end position="386"/>
    </location>
</feature>
<feature type="region of interest" description="G1" evidence="1">
    <location>
        <begin position="487"/>
        <end position="494"/>
    </location>
</feature>
<feature type="region of interest" description="G2" evidence="1">
    <location>
        <begin position="512"/>
        <end position="516"/>
    </location>
</feature>
<feature type="region of interest" description="G3" evidence="1">
    <location>
        <begin position="534"/>
        <end position="537"/>
    </location>
</feature>
<feature type="region of interest" description="G4" evidence="1">
    <location>
        <begin position="588"/>
        <end position="591"/>
    </location>
</feature>
<feature type="region of interest" description="G5" evidence="1">
    <location>
        <begin position="624"/>
        <end position="626"/>
    </location>
</feature>
<feature type="compositionally biased region" description="Basic and acidic residues" evidence="3">
    <location>
        <begin position="102"/>
        <end position="179"/>
    </location>
</feature>
<feature type="compositionally biased region" description="Basic and acidic residues" evidence="3">
    <location>
        <begin position="217"/>
        <end position="229"/>
    </location>
</feature>
<feature type="compositionally biased region" description="Basic and acidic residues" evidence="3">
    <location>
        <begin position="260"/>
        <end position="273"/>
    </location>
</feature>
<feature type="compositionally biased region" description="Polar residues" evidence="3">
    <location>
        <begin position="317"/>
        <end position="326"/>
    </location>
</feature>
<feature type="compositionally biased region" description="Basic and acidic residues" evidence="3">
    <location>
        <begin position="347"/>
        <end position="356"/>
    </location>
</feature>
<feature type="binding site" evidence="2">
    <location>
        <begin position="487"/>
        <end position="494"/>
    </location>
    <ligand>
        <name>GTP</name>
        <dbReference type="ChEBI" id="CHEBI:37565"/>
    </ligand>
</feature>
<feature type="binding site" evidence="2">
    <location>
        <begin position="534"/>
        <end position="538"/>
    </location>
    <ligand>
        <name>GTP</name>
        <dbReference type="ChEBI" id="CHEBI:37565"/>
    </ligand>
</feature>
<feature type="binding site" evidence="2">
    <location>
        <begin position="588"/>
        <end position="591"/>
    </location>
    <ligand>
        <name>GTP</name>
        <dbReference type="ChEBI" id="CHEBI:37565"/>
    </ligand>
</feature>